<dbReference type="EMBL" id="BC102990">
    <property type="protein sequence ID" value="AAI02991.1"/>
    <property type="molecule type" value="mRNA"/>
</dbReference>
<dbReference type="RefSeq" id="NP_001030196.1">
    <property type="nucleotide sequence ID" value="NM_001035024.1"/>
</dbReference>
<dbReference type="SMR" id="Q3SZB3"/>
<dbReference type="FunCoup" id="Q3SZB3">
    <property type="interactions" value="3444"/>
</dbReference>
<dbReference type="STRING" id="9913.ENSBTAP00000031959"/>
<dbReference type="PaxDb" id="9913-ENSBTAP00000031959"/>
<dbReference type="PeptideAtlas" id="Q3SZB3"/>
<dbReference type="GeneID" id="505489"/>
<dbReference type="KEGG" id="bta:505489"/>
<dbReference type="CTD" id="92609"/>
<dbReference type="eggNOG" id="KOG2832">
    <property type="taxonomic scope" value="Eukaryota"/>
</dbReference>
<dbReference type="InParanoid" id="Q3SZB3"/>
<dbReference type="OrthoDB" id="287041at2759"/>
<dbReference type="Proteomes" id="UP000009136">
    <property type="component" value="Unplaced"/>
</dbReference>
<dbReference type="GO" id="GO:0005744">
    <property type="term" value="C:TIM23 mitochondrial import inner membrane translocase complex"/>
    <property type="evidence" value="ECO:0000318"/>
    <property type="project" value="GO_Central"/>
</dbReference>
<dbReference type="GO" id="GO:0030150">
    <property type="term" value="P:protein import into mitochondrial matrix"/>
    <property type="evidence" value="ECO:0000250"/>
    <property type="project" value="UniProtKB"/>
</dbReference>
<dbReference type="CDD" id="cd07521">
    <property type="entry name" value="HAD_FCP1-like"/>
    <property type="match status" value="1"/>
</dbReference>
<dbReference type="FunFam" id="3.40.50.1000:FF:000019">
    <property type="entry name" value="Mitochondrial import inner membrane translocase subunit TIM50"/>
    <property type="match status" value="1"/>
</dbReference>
<dbReference type="Gene3D" id="3.40.50.1000">
    <property type="entry name" value="HAD superfamily/HAD-like"/>
    <property type="match status" value="1"/>
</dbReference>
<dbReference type="InterPro" id="IPR004274">
    <property type="entry name" value="FCP1_dom"/>
</dbReference>
<dbReference type="InterPro" id="IPR036412">
    <property type="entry name" value="HAD-like_sf"/>
</dbReference>
<dbReference type="InterPro" id="IPR023214">
    <property type="entry name" value="HAD_sf"/>
</dbReference>
<dbReference type="InterPro" id="IPR050365">
    <property type="entry name" value="TIM50"/>
</dbReference>
<dbReference type="PANTHER" id="PTHR12210">
    <property type="entry name" value="DULLARD PROTEIN PHOSPHATASE"/>
    <property type="match status" value="1"/>
</dbReference>
<dbReference type="Pfam" id="PF03031">
    <property type="entry name" value="NIF"/>
    <property type="match status" value="1"/>
</dbReference>
<dbReference type="SMART" id="SM00577">
    <property type="entry name" value="CPDc"/>
    <property type="match status" value="1"/>
</dbReference>
<dbReference type="SUPFAM" id="SSF56784">
    <property type="entry name" value="HAD-like"/>
    <property type="match status" value="1"/>
</dbReference>
<dbReference type="PROSITE" id="PS50969">
    <property type="entry name" value="FCP1"/>
    <property type="match status" value="1"/>
</dbReference>
<organism>
    <name type="scientific">Bos taurus</name>
    <name type="common">Bovine</name>
    <dbReference type="NCBI Taxonomy" id="9913"/>
    <lineage>
        <taxon>Eukaryota</taxon>
        <taxon>Metazoa</taxon>
        <taxon>Chordata</taxon>
        <taxon>Craniata</taxon>
        <taxon>Vertebrata</taxon>
        <taxon>Euteleostomi</taxon>
        <taxon>Mammalia</taxon>
        <taxon>Eutheria</taxon>
        <taxon>Laurasiatheria</taxon>
        <taxon>Artiodactyla</taxon>
        <taxon>Ruminantia</taxon>
        <taxon>Pecora</taxon>
        <taxon>Bovidae</taxon>
        <taxon>Bovinae</taxon>
        <taxon>Bos</taxon>
    </lineage>
</organism>
<feature type="transit peptide" description="Mitochondrion" evidence="2">
    <location>
        <begin position="1"/>
        <end position="44"/>
    </location>
</feature>
<feature type="chain" id="PRO_0000043114" description="Mitochondrial import inner membrane translocase subunit TIM50">
    <location>
        <begin position="45"/>
        <end position="355"/>
    </location>
</feature>
<feature type="topological domain" description="Mitochondrial matrix" evidence="2">
    <location>
        <begin position="45"/>
        <end position="67"/>
    </location>
</feature>
<feature type="transmembrane region" description="Helical" evidence="2">
    <location>
        <begin position="68"/>
        <end position="88"/>
    </location>
</feature>
<feature type="topological domain" description="Mitochondrial intermembrane" evidence="2">
    <location>
        <begin position="89"/>
        <end position="355"/>
    </location>
</feature>
<feature type="domain" description="FCP1 homology" evidence="3">
    <location>
        <begin position="145"/>
        <end position="288"/>
    </location>
</feature>
<feature type="region of interest" description="Disordered" evidence="4">
    <location>
        <begin position="25"/>
        <end position="61"/>
    </location>
</feature>
<feature type="compositionally biased region" description="Polar residues" evidence="4">
    <location>
        <begin position="47"/>
        <end position="61"/>
    </location>
</feature>
<feature type="modified residue" description="Phosphoserine" evidence="1">
    <location>
        <position position="343"/>
    </location>
</feature>
<protein>
    <recommendedName>
        <fullName>Mitochondrial import inner membrane translocase subunit TIM50</fullName>
    </recommendedName>
</protein>
<gene>
    <name type="primary">TIMM50</name>
    <name type="synonym">TIM50</name>
</gene>
<accession>Q3SZB3</accession>
<reference key="1">
    <citation type="submission" date="2005-08" db="EMBL/GenBank/DDBJ databases">
        <authorList>
            <consortium name="NIH - Mammalian Gene Collection (MGC) project"/>
        </authorList>
    </citation>
    <scope>NUCLEOTIDE SEQUENCE [LARGE SCALE MRNA]</scope>
    <source>
        <strain>Hereford</strain>
        <tissue>Rumen</tissue>
    </source>
</reference>
<sequence>MAASAAVFLRLRSGLRQGARGLCARLATPPPRAPDQAAEIGSRAGTKAQTQGPQQQRSSEGPSYAKKVALWLARLLGAGGTVSVIYIFGNNAVDENGAKIPDEFDNDPILVQQLRRTYKYFKDYRQMIIEPTSPCLLPDPLREPYYQPPYTLVLELTGVLLHPEWSLATGWRFKKRPGIETLFQQLAPLYEIVIFTSETGMTAFPLIDSVDPHGFISYRLFRDATRYMDGHHVKDISCLNRDPARVVVVDCKKEAFRLQPYNGVALRPWDGNSDDRVLLDLSAFLKTIALNGVEDVRTVLEHYALEEDPLEAFKQRQSRLEQEEQQRLAELSKSSKQNLFFSSLTSRLWPRSKQP</sequence>
<comment type="function">
    <text evidence="1">Essential component of the TIM23 complex, a complex that mediates the translocation of transit peptide-containing proteins across the mitochondrial inner membrane. Has some phosphatase activity in vitro; however such activity may not be relevant in vivo.</text>
</comment>
<comment type="subunit">
    <text evidence="1">Component of the TIM23 complex at least composed of TIMM23, TIMM17 (TIMM17A or TIMM17B) and TIMM50; within this complex, directly interacts with TIMM23. The complex interacts with the TIMM44 component of the PAM complex and with DNAJC15.</text>
</comment>
<comment type="subcellular location">
    <subcellularLocation>
        <location evidence="1">Mitochondrion inner membrane</location>
        <topology evidence="1">Single-pass membrane protein</topology>
    </subcellularLocation>
</comment>
<comment type="similarity">
    <text evidence="5">Belongs to the TIM50 family.</text>
</comment>
<evidence type="ECO:0000250" key="1">
    <source>
        <dbReference type="UniProtKB" id="Q3ZCQ8"/>
    </source>
</evidence>
<evidence type="ECO:0000255" key="2"/>
<evidence type="ECO:0000255" key="3">
    <source>
        <dbReference type="PROSITE-ProRule" id="PRU00336"/>
    </source>
</evidence>
<evidence type="ECO:0000256" key="4">
    <source>
        <dbReference type="SAM" id="MobiDB-lite"/>
    </source>
</evidence>
<evidence type="ECO:0000305" key="5"/>
<proteinExistence type="evidence at transcript level"/>
<name>TIM50_BOVIN</name>
<keyword id="KW-0472">Membrane</keyword>
<keyword id="KW-0496">Mitochondrion</keyword>
<keyword id="KW-0999">Mitochondrion inner membrane</keyword>
<keyword id="KW-0597">Phosphoprotein</keyword>
<keyword id="KW-0653">Protein transport</keyword>
<keyword id="KW-1185">Reference proteome</keyword>
<keyword id="KW-0809">Transit peptide</keyword>
<keyword id="KW-0811">Translocation</keyword>
<keyword id="KW-0812">Transmembrane</keyword>
<keyword id="KW-1133">Transmembrane helix</keyword>
<keyword id="KW-0813">Transport</keyword>